<proteinExistence type="inferred from homology"/>
<comment type="function">
    <text evidence="1">mRNA decapping enzyme that specifically removes the nicotinamide adenine dinucleotide (NAD) cap from a subset of mRNAs by hydrolyzing the diphosphate linkage to produce nicotinamide mononucleotide (NMN) and 5' monophosphate mRNA. The NAD-cap is present at the 5'-end of some mRNAs and stabilizes RNA against 5'-processing. Has preference for mRNAs with a 5'-end purine. Catalyzes the hydrolysis of a broad range of dinucleotide pyrophosphates.</text>
</comment>
<comment type="catalytic activity">
    <reaction evidence="1">
        <text>a 5'-end NAD(+)-phospho-ribonucleoside in mRNA + H2O = a 5'-end phospho-adenosine-phospho-ribonucleoside in mRNA + beta-nicotinamide D-ribonucleotide + 2 H(+)</text>
        <dbReference type="Rhea" id="RHEA:60876"/>
        <dbReference type="Rhea" id="RHEA-COMP:15698"/>
        <dbReference type="Rhea" id="RHEA-COMP:15719"/>
        <dbReference type="ChEBI" id="CHEBI:14649"/>
        <dbReference type="ChEBI" id="CHEBI:15377"/>
        <dbReference type="ChEBI" id="CHEBI:15378"/>
        <dbReference type="ChEBI" id="CHEBI:144029"/>
        <dbReference type="ChEBI" id="CHEBI:144051"/>
    </reaction>
    <physiologicalReaction direction="left-to-right" evidence="1">
        <dbReference type="Rhea" id="RHEA:60877"/>
    </physiologicalReaction>
</comment>
<comment type="catalytic activity">
    <reaction evidence="1">
        <text>NAD(+) + H2O = beta-nicotinamide D-ribonucleotide + AMP + 2 H(+)</text>
        <dbReference type="Rhea" id="RHEA:11800"/>
        <dbReference type="ChEBI" id="CHEBI:14649"/>
        <dbReference type="ChEBI" id="CHEBI:15377"/>
        <dbReference type="ChEBI" id="CHEBI:15378"/>
        <dbReference type="ChEBI" id="CHEBI:57540"/>
        <dbReference type="ChEBI" id="CHEBI:456215"/>
        <dbReference type="EC" id="3.6.1.22"/>
    </reaction>
</comment>
<comment type="catalytic activity">
    <reaction evidence="1">
        <text>NADH + H2O = reduced beta-nicotinamide D-ribonucleotide + AMP + 2 H(+)</text>
        <dbReference type="Rhea" id="RHEA:48868"/>
        <dbReference type="ChEBI" id="CHEBI:15377"/>
        <dbReference type="ChEBI" id="CHEBI:15378"/>
        <dbReference type="ChEBI" id="CHEBI:57945"/>
        <dbReference type="ChEBI" id="CHEBI:90832"/>
        <dbReference type="ChEBI" id="CHEBI:456215"/>
        <dbReference type="EC" id="3.6.1.22"/>
    </reaction>
</comment>
<comment type="cofactor">
    <cofactor evidence="1">
        <name>Mg(2+)</name>
        <dbReference type="ChEBI" id="CHEBI:18420"/>
    </cofactor>
    <cofactor evidence="1">
        <name>Mn(2+)</name>
        <dbReference type="ChEBI" id="CHEBI:29035"/>
    </cofactor>
    <text evidence="1">Divalent metal cations. Mg(2+) or Mn(2+).</text>
</comment>
<comment type="cofactor">
    <cofactor evidence="1">
        <name>Zn(2+)</name>
        <dbReference type="ChEBI" id="CHEBI:29105"/>
    </cofactor>
    <text evidence="1">Binds 1 zinc ion per subunit.</text>
</comment>
<comment type="subunit">
    <text evidence="1">Homodimer.</text>
</comment>
<comment type="similarity">
    <text evidence="1">Belongs to the Nudix hydrolase family. NudC subfamily.</text>
</comment>
<protein>
    <recommendedName>
        <fullName evidence="1">NAD-capped RNA hydrolase NudC</fullName>
        <shortName evidence="1">DeNADding enzyme NudC</shortName>
        <ecNumber evidence="1">3.6.1.-</ecNumber>
    </recommendedName>
    <alternativeName>
        <fullName evidence="1">NADH pyrophosphatase</fullName>
        <ecNumber evidence="1">3.6.1.22</ecNumber>
    </alternativeName>
</protein>
<reference key="1">
    <citation type="journal article" date="2005" name="Nat. Biotechnol.">
        <title>Complete genome sequence of the plant commensal Pseudomonas fluorescens Pf-5.</title>
        <authorList>
            <person name="Paulsen I.T."/>
            <person name="Press C.M."/>
            <person name="Ravel J."/>
            <person name="Kobayashi D.Y."/>
            <person name="Myers G.S.A."/>
            <person name="Mavrodi D.V."/>
            <person name="DeBoy R.T."/>
            <person name="Seshadri R."/>
            <person name="Ren Q."/>
            <person name="Madupu R."/>
            <person name="Dodson R.J."/>
            <person name="Durkin A.S."/>
            <person name="Brinkac L.M."/>
            <person name="Daugherty S.C."/>
            <person name="Sullivan S.A."/>
            <person name="Rosovitz M.J."/>
            <person name="Gwinn M.L."/>
            <person name="Zhou L."/>
            <person name="Schneider D.J."/>
            <person name="Cartinhour S.W."/>
            <person name="Nelson W.C."/>
            <person name="Weidman J."/>
            <person name="Watkins K."/>
            <person name="Tran K."/>
            <person name="Khouri H."/>
            <person name="Pierson E.A."/>
            <person name="Pierson L.S. III"/>
            <person name="Thomashow L.S."/>
            <person name="Loper J.E."/>
        </authorList>
    </citation>
    <scope>NUCLEOTIDE SEQUENCE [LARGE SCALE GENOMIC DNA]</scope>
    <source>
        <strain>ATCC BAA-477 / NRRL B-23932 / Pf-5</strain>
    </source>
</reference>
<feature type="chain" id="PRO_0000232117" description="NAD-capped RNA hydrolase NudC">
    <location>
        <begin position="1"/>
        <end position="276"/>
    </location>
</feature>
<feature type="domain" description="Nudix hydrolase" evidence="1">
    <location>
        <begin position="139"/>
        <end position="262"/>
    </location>
</feature>
<feature type="short sequence motif" description="Nudix box" evidence="1">
    <location>
        <begin position="173"/>
        <end position="194"/>
    </location>
</feature>
<feature type="binding site" evidence="1">
    <location>
        <position position="82"/>
    </location>
    <ligand>
        <name>substrate</name>
    </ligand>
</feature>
<feature type="binding site" evidence="1">
    <location>
        <position position="112"/>
    </location>
    <ligand>
        <name>Zn(2+)</name>
        <dbReference type="ChEBI" id="CHEBI:29105"/>
    </ligand>
</feature>
<feature type="binding site" evidence="1">
    <location>
        <position position="115"/>
    </location>
    <ligand>
        <name>Zn(2+)</name>
        <dbReference type="ChEBI" id="CHEBI:29105"/>
    </ligand>
</feature>
<feature type="binding site" evidence="1">
    <location>
        <position position="125"/>
    </location>
    <ligand>
        <name>substrate</name>
    </ligand>
</feature>
<feature type="binding site" evidence="1">
    <location>
        <position position="130"/>
    </location>
    <ligand>
        <name>Zn(2+)</name>
        <dbReference type="ChEBI" id="CHEBI:29105"/>
    </ligand>
</feature>
<feature type="binding site" evidence="1">
    <location>
        <position position="133"/>
    </location>
    <ligand>
        <name>Zn(2+)</name>
        <dbReference type="ChEBI" id="CHEBI:29105"/>
    </ligand>
</feature>
<feature type="binding site" evidence="1">
    <location>
        <position position="138"/>
    </location>
    <ligand>
        <name>substrate</name>
    </ligand>
</feature>
<feature type="binding site" evidence="1">
    <location>
        <position position="172"/>
    </location>
    <ligand>
        <name>a divalent metal cation</name>
        <dbReference type="ChEBI" id="CHEBI:60240"/>
        <label>1</label>
    </ligand>
</feature>
<feature type="binding site" evidence="1">
    <location>
        <position position="188"/>
    </location>
    <ligand>
        <name>a divalent metal cation</name>
        <dbReference type="ChEBI" id="CHEBI:60240"/>
        <label>2</label>
    </ligand>
</feature>
<feature type="binding site" evidence="1">
    <location>
        <position position="188"/>
    </location>
    <ligand>
        <name>a divalent metal cation</name>
        <dbReference type="ChEBI" id="CHEBI:60240"/>
        <label>3</label>
    </ligand>
</feature>
<feature type="binding site" evidence="1">
    <location>
        <position position="192"/>
    </location>
    <ligand>
        <name>a divalent metal cation</name>
        <dbReference type="ChEBI" id="CHEBI:60240"/>
        <label>1</label>
    </ligand>
</feature>
<feature type="binding site" evidence="1">
    <location>
        <position position="192"/>
    </location>
    <ligand>
        <name>a divalent metal cation</name>
        <dbReference type="ChEBI" id="CHEBI:60240"/>
        <label>3</label>
    </ligand>
</feature>
<feature type="binding site" evidence="1">
    <location>
        <begin position="206"/>
        <end position="213"/>
    </location>
    <ligand>
        <name>substrate</name>
    </ligand>
</feature>
<feature type="binding site" evidence="1">
    <location>
        <position position="233"/>
    </location>
    <ligand>
        <name>a divalent metal cation</name>
        <dbReference type="ChEBI" id="CHEBI:60240"/>
        <label>1</label>
    </ligand>
</feature>
<feature type="binding site" evidence="1">
    <location>
        <position position="233"/>
    </location>
    <ligand>
        <name>a divalent metal cation</name>
        <dbReference type="ChEBI" id="CHEBI:60240"/>
        <label>3</label>
    </ligand>
</feature>
<feature type="binding site" evidence="1">
    <location>
        <position position="255"/>
    </location>
    <ligand>
        <name>substrate</name>
    </ligand>
</feature>
<keyword id="KW-0378">Hydrolase</keyword>
<keyword id="KW-0460">Magnesium</keyword>
<keyword id="KW-0464">Manganese</keyword>
<keyword id="KW-0479">Metal-binding</keyword>
<keyword id="KW-0520">NAD</keyword>
<keyword id="KW-0862">Zinc</keyword>
<dbReference type="EC" id="3.6.1.-" evidence="1"/>
<dbReference type="EC" id="3.6.1.22" evidence="1"/>
<dbReference type="EMBL" id="CP000076">
    <property type="protein sequence ID" value="AAY92535.1"/>
    <property type="molecule type" value="Genomic_DNA"/>
</dbReference>
<dbReference type="RefSeq" id="WP_011061549.1">
    <property type="nucleotide sequence ID" value="NC_004129.6"/>
</dbReference>
<dbReference type="SMR" id="Q4KBL2"/>
<dbReference type="STRING" id="220664.PFL_3266"/>
<dbReference type="KEGG" id="pfl:PFL_3266"/>
<dbReference type="PATRIC" id="fig|220664.5.peg.3334"/>
<dbReference type="eggNOG" id="COG2816">
    <property type="taxonomic scope" value="Bacteria"/>
</dbReference>
<dbReference type="HOGENOM" id="CLU_037162_0_1_6"/>
<dbReference type="Proteomes" id="UP000008540">
    <property type="component" value="Chromosome"/>
</dbReference>
<dbReference type="GO" id="GO:0005829">
    <property type="term" value="C:cytosol"/>
    <property type="evidence" value="ECO:0007669"/>
    <property type="project" value="TreeGrafter"/>
</dbReference>
<dbReference type="GO" id="GO:0000287">
    <property type="term" value="F:magnesium ion binding"/>
    <property type="evidence" value="ECO:0007669"/>
    <property type="project" value="UniProtKB-UniRule"/>
</dbReference>
<dbReference type="GO" id="GO:0030145">
    <property type="term" value="F:manganese ion binding"/>
    <property type="evidence" value="ECO:0007669"/>
    <property type="project" value="UniProtKB-UniRule"/>
</dbReference>
<dbReference type="GO" id="GO:0000210">
    <property type="term" value="F:NAD+ diphosphatase activity"/>
    <property type="evidence" value="ECO:0007669"/>
    <property type="project" value="UniProtKB-UniRule"/>
</dbReference>
<dbReference type="GO" id="GO:0035529">
    <property type="term" value="F:NADH pyrophosphatase activity"/>
    <property type="evidence" value="ECO:0007669"/>
    <property type="project" value="TreeGrafter"/>
</dbReference>
<dbReference type="GO" id="GO:0110153">
    <property type="term" value="F:RNA NAD-cap (NMN-forming) hydrolase activity"/>
    <property type="evidence" value="ECO:0007669"/>
    <property type="project" value="RHEA"/>
</dbReference>
<dbReference type="GO" id="GO:0008270">
    <property type="term" value="F:zinc ion binding"/>
    <property type="evidence" value="ECO:0007669"/>
    <property type="project" value="UniProtKB-UniRule"/>
</dbReference>
<dbReference type="GO" id="GO:0019677">
    <property type="term" value="P:NAD catabolic process"/>
    <property type="evidence" value="ECO:0007669"/>
    <property type="project" value="TreeGrafter"/>
</dbReference>
<dbReference type="GO" id="GO:0006734">
    <property type="term" value="P:NADH metabolic process"/>
    <property type="evidence" value="ECO:0007669"/>
    <property type="project" value="TreeGrafter"/>
</dbReference>
<dbReference type="GO" id="GO:0006742">
    <property type="term" value="P:NADP catabolic process"/>
    <property type="evidence" value="ECO:0007669"/>
    <property type="project" value="TreeGrafter"/>
</dbReference>
<dbReference type="CDD" id="cd03429">
    <property type="entry name" value="NUDIX_NADH_pyrophosphatase_Nudt13"/>
    <property type="match status" value="1"/>
</dbReference>
<dbReference type="Gene3D" id="3.90.79.20">
    <property type="match status" value="1"/>
</dbReference>
<dbReference type="Gene3D" id="3.90.79.10">
    <property type="entry name" value="Nucleoside Triphosphate Pyrophosphohydrolase"/>
    <property type="match status" value="1"/>
</dbReference>
<dbReference type="HAMAP" id="MF_00297">
    <property type="entry name" value="Nudix_NudC"/>
    <property type="match status" value="1"/>
</dbReference>
<dbReference type="InterPro" id="IPR050241">
    <property type="entry name" value="NAD-cap_RNA_hydrolase_NudC"/>
</dbReference>
<dbReference type="InterPro" id="IPR015375">
    <property type="entry name" value="NADH_PPase-like_N"/>
</dbReference>
<dbReference type="InterPro" id="IPR049734">
    <property type="entry name" value="NudC-like_C"/>
</dbReference>
<dbReference type="InterPro" id="IPR015797">
    <property type="entry name" value="NUDIX_hydrolase-like_dom_sf"/>
</dbReference>
<dbReference type="InterPro" id="IPR000086">
    <property type="entry name" value="NUDIX_hydrolase_dom"/>
</dbReference>
<dbReference type="InterPro" id="IPR022925">
    <property type="entry name" value="RNA_Hydrolase_NudC"/>
</dbReference>
<dbReference type="InterPro" id="IPR015376">
    <property type="entry name" value="Znr_NADH_PPase"/>
</dbReference>
<dbReference type="NCBIfam" id="NF001299">
    <property type="entry name" value="PRK00241.1"/>
    <property type="match status" value="1"/>
</dbReference>
<dbReference type="PANTHER" id="PTHR42904:SF6">
    <property type="entry name" value="NAD-CAPPED RNA HYDROLASE NUDT12"/>
    <property type="match status" value="1"/>
</dbReference>
<dbReference type="PANTHER" id="PTHR42904">
    <property type="entry name" value="NUDIX HYDROLASE, NUDC SUBFAMILY"/>
    <property type="match status" value="1"/>
</dbReference>
<dbReference type="Pfam" id="PF00293">
    <property type="entry name" value="NUDIX"/>
    <property type="match status" value="1"/>
</dbReference>
<dbReference type="Pfam" id="PF09296">
    <property type="entry name" value="NUDIX-like"/>
    <property type="match status" value="1"/>
</dbReference>
<dbReference type="Pfam" id="PF09297">
    <property type="entry name" value="Zn_ribbon_NUD"/>
    <property type="match status" value="1"/>
</dbReference>
<dbReference type="SUPFAM" id="SSF55811">
    <property type="entry name" value="Nudix"/>
    <property type="match status" value="2"/>
</dbReference>
<dbReference type="PROSITE" id="PS51462">
    <property type="entry name" value="NUDIX"/>
    <property type="match status" value="1"/>
</dbReference>
<evidence type="ECO:0000255" key="1">
    <source>
        <dbReference type="HAMAP-Rule" id="MF_00297"/>
    </source>
</evidence>
<sequence>MIERWTTAVLDTDLPGGWAVARGPDGFLYDDNGALFPRHWLKGQDLPLLAEHGIGHLDGEPVYLLELSARAEVPGCGWKGLRAFMLEGDHTLYKVLGYAAQIGTWAREHRYCGSCGRPMAQVPGERAMYCQPCDLRSYPRISPSMIVLITRGDEILLARSPRFVTGVYSTLAGFAEPGESAEDCLIREVREEVSIEVRNIQYVGSQCWPFPHSMMLGFHAEYAGGEIIPQEDEIEDAQWFSVHALPPLPASRSIARYLIDLYVARRLGHAEPVLPG</sequence>
<organism>
    <name type="scientific">Pseudomonas fluorescens (strain ATCC BAA-477 / NRRL B-23932 / Pf-5)</name>
    <dbReference type="NCBI Taxonomy" id="220664"/>
    <lineage>
        <taxon>Bacteria</taxon>
        <taxon>Pseudomonadati</taxon>
        <taxon>Pseudomonadota</taxon>
        <taxon>Gammaproteobacteria</taxon>
        <taxon>Pseudomonadales</taxon>
        <taxon>Pseudomonadaceae</taxon>
        <taxon>Pseudomonas</taxon>
    </lineage>
</organism>
<name>NUDC_PSEF5</name>
<accession>Q4KBL2</accession>
<gene>
    <name evidence="1" type="primary">nudC</name>
    <name type="ordered locus">PFL_3266</name>
</gene>